<reference key="1">
    <citation type="journal article" date="2005" name="BMC Biol.">
        <title>The sequence of rice chromosomes 11 and 12, rich in disease resistance genes and recent gene duplications.</title>
        <authorList>
            <consortium name="The rice chromosomes 11 and 12 sequencing consortia"/>
        </authorList>
    </citation>
    <scope>NUCLEOTIDE SEQUENCE [LARGE SCALE GENOMIC DNA]</scope>
    <source>
        <strain>cv. Nipponbare</strain>
    </source>
</reference>
<reference key="2">
    <citation type="journal article" date="2005" name="Nature">
        <title>The map-based sequence of the rice genome.</title>
        <authorList>
            <consortium name="International rice genome sequencing project (IRGSP)"/>
        </authorList>
    </citation>
    <scope>NUCLEOTIDE SEQUENCE [LARGE SCALE GENOMIC DNA]</scope>
    <source>
        <strain>cv. Nipponbare</strain>
    </source>
</reference>
<reference key="3">
    <citation type="journal article" date="2008" name="Nucleic Acids Res.">
        <title>The rice annotation project database (RAP-DB): 2008 update.</title>
        <authorList>
            <consortium name="The rice annotation project (RAP)"/>
        </authorList>
    </citation>
    <scope>GENOME REANNOTATION</scope>
    <source>
        <strain>cv. Nipponbare</strain>
    </source>
</reference>
<reference key="4">
    <citation type="journal article" date="2013" name="Rice">
        <title>Improvement of the Oryza sativa Nipponbare reference genome using next generation sequence and optical map data.</title>
        <authorList>
            <person name="Kawahara Y."/>
            <person name="de la Bastide M."/>
            <person name="Hamilton J.P."/>
            <person name="Kanamori H."/>
            <person name="McCombie W.R."/>
            <person name="Ouyang S."/>
            <person name="Schwartz D.C."/>
            <person name="Tanaka T."/>
            <person name="Wu J."/>
            <person name="Zhou S."/>
            <person name="Childs K.L."/>
            <person name="Davidson R.M."/>
            <person name="Lin H."/>
            <person name="Quesada-Ocampo L."/>
            <person name="Vaillancourt B."/>
            <person name="Sakai H."/>
            <person name="Lee S.S."/>
            <person name="Kim J."/>
            <person name="Numa H."/>
            <person name="Itoh T."/>
            <person name="Buell C.R."/>
            <person name="Matsumoto T."/>
        </authorList>
    </citation>
    <scope>GENOME REANNOTATION</scope>
    <source>
        <strain>cv. Nipponbare</strain>
    </source>
</reference>
<reference key="5">
    <citation type="journal article" date="2005" name="PLoS Biol.">
        <title>The genomes of Oryza sativa: a history of duplications.</title>
        <authorList>
            <person name="Yu J."/>
            <person name="Wang J."/>
            <person name="Lin W."/>
            <person name="Li S."/>
            <person name="Li H."/>
            <person name="Zhou J."/>
            <person name="Ni P."/>
            <person name="Dong W."/>
            <person name="Hu S."/>
            <person name="Zeng C."/>
            <person name="Zhang J."/>
            <person name="Zhang Y."/>
            <person name="Li R."/>
            <person name="Xu Z."/>
            <person name="Li S."/>
            <person name="Li X."/>
            <person name="Zheng H."/>
            <person name="Cong L."/>
            <person name="Lin L."/>
            <person name="Yin J."/>
            <person name="Geng J."/>
            <person name="Li G."/>
            <person name="Shi J."/>
            <person name="Liu J."/>
            <person name="Lv H."/>
            <person name="Li J."/>
            <person name="Wang J."/>
            <person name="Deng Y."/>
            <person name="Ran L."/>
            <person name="Shi X."/>
            <person name="Wang X."/>
            <person name="Wu Q."/>
            <person name="Li C."/>
            <person name="Ren X."/>
            <person name="Wang J."/>
            <person name="Wang X."/>
            <person name="Li D."/>
            <person name="Liu D."/>
            <person name="Zhang X."/>
            <person name="Ji Z."/>
            <person name="Zhao W."/>
            <person name="Sun Y."/>
            <person name="Zhang Z."/>
            <person name="Bao J."/>
            <person name="Han Y."/>
            <person name="Dong L."/>
            <person name="Ji J."/>
            <person name="Chen P."/>
            <person name="Wu S."/>
            <person name="Liu J."/>
            <person name="Xiao Y."/>
            <person name="Bu D."/>
            <person name="Tan J."/>
            <person name="Yang L."/>
            <person name="Ye C."/>
            <person name="Zhang J."/>
            <person name="Xu J."/>
            <person name="Zhou Y."/>
            <person name="Yu Y."/>
            <person name="Zhang B."/>
            <person name="Zhuang S."/>
            <person name="Wei H."/>
            <person name="Liu B."/>
            <person name="Lei M."/>
            <person name="Yu H."/>
            <person name="Li Y."/>
            <person name="Xu H."/>
            <person name="Wei S."/>
            <person name="He X."/>
            <person name="Fang L."/>
            <person name="Zhang Z."/>
            <person name="Zhang Y."/>
            <person name="Huang X."/>
            <person name="Su Z."/>
            <person name="Tong W."/>
            <person name="Li J."/>
            <person name="Tong Z."/>
            <person name="Li S."/>
            <person name="Ye J."/>
            <person name="Wang L."/>
            <person name="Fang L."/>
            <person name="Lei T."/>
            <person name="Chen C.-S."/>
            <person name="Chen H.-C."/>
            <person name="Xu Z."/>
            <person name="Li H."/>
            <person name="Huang H."/>
            <person name="Zhang F."/>
            <person name="Xu H."/>
            <person name="Li N."/>
            <person name="Zhao C."/>
            <person name="Li S."/>
            <person name="Dong L."/>
            <person name="Huang Y."/>
            <person name="Li L."/>
            <person name="Xi Y."/>
            <person name="Qi Q."/>
            <person name="Li W."/>
            <person name="Zhang B."/>
            <person name="Hu W."/>
            <person name="Zhang Y."/>
            <person name="Tian X."/>
            <person name="Jiao Y."/>
            <person name="Liang X."/>
            <person name="Jin J."/>
            <person name="Gao L."/>
            <person name="Zheng W."/>
            <person name="Hao B."/>
            <person name="Liu S.-M."/>
            <person name="Wang W."/>
            <person name="Yuan L."/>
            <person name="Cao M."/>
            <person name="McDermott J."/>
            <person name="Samudrala R."/>
            <person name="Wang J."/>
            <person name="Wong G.K.-S."/>
            <person name="Yang H."/>
        </authorList>
    </citation>
    <scope>NUCLEOTIDE SEQUENCE [LARGE SCALE GENOMIC DNA]</scope>
    <source>
        <strain>cv. Nipponbare</strain>
    </source>
</reference>
<reference key="6">
    <citation type="journal article" date="2003" name="Science">
        <title>Collection, mapping, and annotation of over 28,000 cDNA clones from japonica rice.</title>
        <authorList>
            <consortium name="The rice full-length cDNA consortium"/>
        </authorList>
    </citation>
    <scope>NUCLEOTIDE SEQUENCE [LARGE SCALE MRNA]</scope>
    <source>
        <strain>cv. Nipponbare</strain>
    </source>
</reference>
<organism>
    <name type="scientific">Oryza sativa subsp. japonica</name>
    <name type="common">Rice</name>
    <dbReference type="NCBI Taxonomy" id="39947"/>
    <lineage>
        <taxon>Eukaryota</taxon>
        <taxon>Viridiplantae</taxon>
        <taxon>Streptophyta</taxon>
        <taxon>Embryophyta</taxon>
        <taxon>Tracheophyta</taxon>
        <taxon>Spermatophyta</taxon>
        <taxon>Magnoliopsida</taxon>
        <taxon>Liliopsida</taxon>
        <taxon>Poales</taxon>
        <taxon>Poaceae</taxon>
        <taxon>BOP clade</taxon>
        <taxon>Oryzoideae</taxon>
        <taxon>Oryzeae</taxon>
        <taxon>Oryzinae</taxon>
        <taxon>Oryza</taxon>
        <taxon>Oryza sativa</taxon>
    </lineage>
</organism>
<sequence length="439" mass="49676">MMPPKPAAEDVADEQPEPPDEDPDVAEADPTGRYLRYREIIGSGSSKTVYKAFDAVDGIEVAWGKVEINERIMGSSKELQRLRTEIQLLKSLQHKHILKLYASWVDTNRRTVNIVTELFTSGNLREYRTKHKKVDMKAMRRWAKQILTGLEYLHSQKPPIIHRDLKCDNIFINGNHGKVKIGDFGLAMVMQQRKTRSIQGTIEFMAPELFGENYNELVDIYSFGMCMLEMVTCECPYSECKGFIQIYKKITEGVKPAALSKVKDAEVRGFIESCLASVSDRLPASELLKSPFLQSDDANHRSSNSVQEPVKFPENNFTKDEPIFVSLAPNNGTVNGKEQSFILVLQKSDFLLEGNMSTTNPVMLFLRFPGPDGKFKNVQFPFDMEKDTSLSVSTEMVEQLELPEWNNPVLAELIDAFLLHILPSWKPCVKVGKMLPSSS</sequence>
<name>WNK6_ORYSJ</name>
<accession>Q2RA93</accession>
<accession>A0A0P0XZF5</accession>
<accession>Q53PL3</accession>
<gene>
    <name type="primary">WNK6</name>
    <name type="ordered locus">Os11g0160300</name>
    <name type="ordered locus">LOC_Os11g06140</name>
    <name type="ORF">OsJ_031733</name>
</gene>
<feature type="chain" id="PRO_0000351676" description="Probable serine/threonine-protein kinase WNK6">
    <location>
        <begin position="1"/>
        <end position="439"/>
    </location>
</feature>
<feature type="domain" description="Protein kinase" evidence="3">
    <location>
        <begin position="35"/>
        <end position="293"/>
    </location>
</feature>
<feature type="region of interest" description="Disordered" evidence="4">
    <location>
        <begin position="1"/>
        <end position="30"/>
    </location>
</feature>
<feature type="compositionally biased region" description="Acidic residues" evidence="4">
    <location>
        <begin position="10"/>
        <end position="27"/>
    </location>
</feature>
<feature type="active site" description="Proton acceptor" evidence="2">
    <location>
        <position position="183"/>
    </location>
</feature>
<feature type="binding site" evidence="1">
    <location>
        <begin position="116"/>
        <end position="119"/>
    </location>
    <ligand>
        <name>ATP</name>
        <dbReference type="ChEBI" id="CHEBI:30616"/>
    </ligand>
</feature>
<feature type="binding site" evidence="1">
    <location>
        <position position="166"/>
    </location>
    <ligand>
        <name>ATP</name>
        <dbReference type="ChEBI" id="CHEBI:30616"/>
    </ligand>
</feature>
<feature type="sequence conflict" description="In Ref. 6; AK070490." evidence="5" ref="6">
    <original>E</original>
    <variation>K</variation>
    <location>
        <position position="9"/>
    </location>
</feature>
<evidence type="ECO:0000250" key="1">
    <source>
        <dbReference type="UniProtKB" id="Q9H4A3"/>
    </source>
</evidence>
<evidence type="ECO:0000250" key="2">
    <source>
        <dbReference type="UniProtKB" id="Q9JIH7"/>
    </source>
</evidence>
<evidence type="ECO:0000255" key="3">
    <source>
        <dbReference type="PROSITE-ProRule" id="PRU00159"/>
    </source>
</evidence>
<evidence type="ECO:0000256" key="4">
    <source>
        <dbReference type="SAM" id="MobiDB-lite"/>
    </source>
</evidence>
<evidence type="ECO:0000305" key="5"/>
<dbReference type="EC" id="2.7.11.1"/>
<dbReference type="EMBL" id="AC120534">
    <property type="protein sequence ID" value="AAX95458.1"/>
    <property type="status" value="ALT_INIT"/>
    <property type="molecule type" value="Genomic_DNA"/>
</dbReference>
<dbReference type="EMBL" id="DP000010">
    <property type="protein sequence ID" value="ABA91584.1"/>
    <property type="molecule type" value="Genomic_DNA"/>
</dbReference>
<dbReference type="EMBL" id="AP008217">
    <property type="protein sequence ID" value="BAF27661.1"/>
    <property type="molecule type" value="Genomic_DNA"/>
</dbReference>
<dbReference type="EMBL" id="AP014967">
    <property type="protein sequence ID" value="BAT12789.1"/>
    <property type="molecule type" value="Genomic_DNA"/>
</dbReference>
<dbReference type="EMBL" id="CM000148">
    <property type="protein sequence ID" value="EAZ17524.1"/>
    <property type="status" value="ALT_INIT"/>
    <property type="molecule type" value="Genomic_DNA"/>
</dbReference>
<dbReference type="EMBL" id="AK070490">
    <property type="status" value="NOT_ANNOTATED_CDS"/>
    <property type="molecule type" value="mRNA"/>
</dbReference>
<dbReference type="RefSeq" id="XP_015616509.1">
    <property type="nucleotide sequence ID" value="XM_015761023.1"/>
</dbReference>
<dbReference type="SMR" id="Q2RA93"/>
<dbReference type="FunCoup" id="Q2RA93">
    <property type="interactions" value="773"/>
</dbReference>
<dbReference type="STRING" id="39947.Q2RA93"/>
<dbReference type="PaxDb" id="39947-Q2RA93"/>
<dbReference type="EnsemblPlants" id="Os11t0160300-01">
    <property type="protein sequence ID" value="Os11t0160300-01"/>
    <property type="gene ID" value="Os11g0160300"/>
</dbReference>
<dbReference type="Gramene" id="Os11t0160300-01">
    <property type="protein sequence ID" value="Os11t0160300-01"/>
    <property type="gene ID" value="Os11g0160300"/>
</dbReference>
<dbReference type="KEGG" id="dosa:Os11g0160300"/>
<dbReference type="eggNOG" id="KOG0584">
    <property type="taxonomic scope" value="Eukaryota"/>
</dbReference>
<dbReference type="HOGENOM" id="CLU_000288_142_5_1"/>
<dbReference type="InParanoid" id="Q2RA93"/>
<dbReference type="OMA" id="QFAAFQE"/>
<dbReference type="OrthoDB" id="4062651at2759"/>
<dbReference type="Proteomes" id="UP000000763">
    <property type="component" value="Chromosome 11"/>
</dbReference>
<dbReference type="Proteomes" id="UP000007752">
    <property type="component" value="Chromosome 11"/>
</dbReference>
<dbReference type="Proteomes" id="UP000059680">
    <property type="component" value="Chromosome 11"/>
</dbReference>
<dbReference type="GO" id="GO:0005737">
    <property type="term" value="C:cytoplasm"/>
    <property type="evidence" value="ECO:0000318"/>
    <property type="project" value="GO_Central"/>
</dbReference>
<dbReference type="GO" id="GO:0005524">
    <property type="term" value="F:ATP binding"/>
    <property type="evidence" value="ECO:0007669"/>
    <property type="project" value="UniProtKB-KW"/>
</dbReference>
<dbReference type="GO" id="GO:0106310">
    <property type="term" value="F:protein serine kinase activity"/>
    <property type="evidence" value="ECO:0007669"/>
    <property type="project" value="RHEA"/>
</dbReference>
<dbReference type="GO" id="GO:0004674">
    <property type="term" value="F:protein serine/threonine kinase activity"/>
    <property type="evidence" value="ECO:0000318"/>
    <property type="project" value="GO_Central"/>
</dbReference>
<dbReference type="GO" id="GO:0035556">
    <property type="term" value="P:intracellular signal transduction"/>
    <property type="evidence" value="ECO:0000318"/>
    <property type="project" value="GO_Central"/>
</dbReference>
<dbReference type="CDD" id="cd13983">
    <property type="entry name" value="STKc_WNK"/>
    <property type="match status" value="1"/>
</dbReference>
<dbReference type="FunFam" id="1.10.510.10:FF:000046">
    <property type="entry name" value="probable serine/threonine-protein kinase WNK9"/>
    <property type="match status" value="1"/>
</dbReference>
<dbReference type="FunFam" id="3.30.200.20:FF:000427">
    <property type="entry name" value="Wnk protein kinase"/>
    <property type="match status" value="1"/>
</dbReference>
<dbReference type="Gene3D" id="3.30.200.20">
    <property type="entry name" value="Phosphorylase Kinase, domain 1"/>
    <property type="match status" value="1"/>
</dbReference>
<dbReference type="Gene3D" id="1.10.510.10">
    <property type="entry name" value="Transferase(Phosphotransferase) domain 1"/>
    <property type="match status" value="1"/>
</dbReference>
<dbReference type="InterPro" id="IPR011009">
    <property type="entry name" value="Kinase-like_dom_sf"/>
</dbReference>
<dbReference type="InterPro" id="IPR000719">
    <property type="entry name" value="Prot_kinase_dom"/>
</dbReference>
<dbReference type="InterPro" id="IPR008271">
    <property type="entry name" value="Ser/Thr_kinase_AS"/>
</dbReference>
<dbReference type="InterPro" id="IPR050588">
    <property type="entry name" value="WNK_Ser-Thr_kinase"/>
</dbReference>
<dbReference type="PANTHER" id="PTHR13902">
    <property type="entry name" value="SERINE/THREONINE-PROTEIN KINASE WNK WITH NO LYSINE -RELATED"/>
    <property type="match status" value="1"/>
</dbReference>
<dbReference type="Pfam" id="PF00069">
    <property type="entry name" value="Pkinase"/>
    <property type="match status" value="1"/>
</dbReference>
<dbReference type="SMART" id="SM00220">
    <property type="entry name" value="S_TKc"/>
    <property type="match status" value="1"/>
</dbReference>
<dbReference type="SUPFAM" id="SSF56112">
    <property type="entry name" value="Protein kinase-like (PK-like)"/>
    <property type="match status" value="1"/>
</dbReference>
<dbReference type="PROSITE" id="PS50011">
    <property type="entry name" value="PROTEIN_KINASE_DOM"/>
    <property type="match status" value="1"/>
</dbReference>
<dbReference type="PROSITE" id="PS00108">
    <property type="entry name" value="PROTEIN_KINASE_ST"/>
    <property type="match status" value="1"/>
</dbReference>
<proteinExistence type="evidence at transcript level"/>
<keyword id="KW-0067">ATP-binding</keyword>
<keyword id="KW-0418">Kinase</keyword>
<keyword id="KW-0547">Nucleotide-binding</keyword>
<keyword id="KW-1185">Reference proteome</keyword>
<keyword id="KW-0723">Serine/threonine-protein kinase</keyword>
<keyword id="KW-0808">Transferase</keyword>
<comment type="catalytic activity">
    <reaction>
        <text>L-seryl-[protein] + ATP = O-phospho-L-seryl-[protein] + ADP + H(+)</text>
        <dbReference type="Rhea" id="RHEA:17989"/>
        <dbReference type="Rhea" id="RHEA-COMP:9863"/>
        <dbReference type="Rhea" id="RHEA-COMP:11604"/>
        <dbReference type="ChEBI" id="CHEBI:15378"/>
        <dbReference type="ChEBI" id="CHEBI:29999"/>
        <dbReference type="ChEBI" id="CHEBI:30616"/>
        <dbReference type="ChEBI" id="CHEBI:83421"/>
        <dbReference type="ChEBI" id="CHEBI:456216"/>
        <dbReference type="EC" id="2.7.11.1"/>
    </reaction>
</comment>
<comment type="catalytic activity">
    <reaction>
        <text>L-threonyl-[protein] + ATP = O-phospho-L-threonyl-[protein] + ADP + H(+)</text>
        <dbReference type="Rhea" id="RHEA:46608"/>
        <dbReference type="Rhea" id="RHEA-COMP:11060"/>
        <dbReference type="Rhea" id="RHEA-COMP:11605"/>
        <dbReference type="ChEBI" id="CHEBI:15378"/>
        <dbReference type="ChEBI" id="CHEBI:30013"/>
        <dbReference type="ChEBI" id="CHEBI:30616"/>
        <dbReference type="ChEBI" id="CHEBI:61977"/>
        <dbReference type="ChEBI" id="CHEBI:456216"/>
        <dbReference type="EC" id="2.7.11.1"/>
    </reaction>
</comment>
<comment type="similarity">
    <text evidence="3">Belongs to the protein kinase superfamily. Ser/Thr protein kinase family. WNK subfamily.</text>
</comment>
<comment type="caution">
    <text evidence="1">Was named WNK/'with no lysine(K)' because key residues for catalysis, including the lysine involved in ATP binding, are either not conserved or differ compared to the residues described in other kinase family proteins.</text>
</comment>
<comment type="sequence caution" evidence="5">
    <conflict type="erroneous initiation">
        <sequence resource="EMBL-CDS" id="AAX95458"/>
    </conflict>
</comment>
<comment type="sequence caution" evidence="5">
    <conflict type="erroneous initiation">
        <sequence resource="EMBL-CDS" id="EAZ17524"/>
    </conflict>
</comment>
<protein>
    <recommendedName>
        <fullName>Probable serine/threonine-protein kinase WNK6</fullName>
        <shortName>OsWNK6</shortName>
        <ecNumber>2.7.11.1</ecNumber>
    </recommendedName>
    <alternativeName>
        <fullName>Protein kinase with no lysine 6</fullName>
    </alternativeName>
</protein>